<evidence type="ECO:0000255" key="1">
    <source>
        <dbReference type="HAMAP-Rule" id="MF_00509"/>
    </source>
</evidence>
<evidence type="ECO:0000256" key="2">
    <source>
        <dbReference type="SAM" id="MobiDB-lite"/>
    </source>
</evidence>
<dbReference type="EMBL" id="CP000712">
    <property type="protein sequence ID" value="ABQ77749.1"/>
    <property type="molecule type" value="Genomic_DNA"/>
</dbReference>
<dbReference type="SMR" id="A5W0T9"/>
<dbReference type="KEGG" id="ppf:Pput_1593"/>
<dbReference type="eggNOG" id="COG3115">
    <property type="taxonomic scope" value="Bacteria"/>
</dbReference>
<dbReference type="HOGENOM" id="CLU_030174_0_1_6"/>
<dbReference type="GO" id="GO:0032153">
    <property type="term" value="C:cell division site"/>
    <property type="evidence" value="ECO:0007669"/>
    <property type="project" value="UniProtKB-UniRule"/>
</dbReference>
<dbReference type="GO" id="GO:0005886">
    <property type="term" value="C:plasma membrane"/>
    <property type="evidence" value="ECO:0007669"/>
    <property type="project" value="UniProtKB-SubCell"/>
</dbReference>
<dbReference type="GO" id="GO:0000917">
    <property type="term" value="P:division septum assembly"/>
    <property type="evidence" value="ECO:0007669"/>
    <property type="project" value="TreeGrafter"/>
</dbReference>
<dbReference type="GO" id="GO:0043093">
    <property type="term" value="P:FtsZ-dependent cytokinesis"/>
    <property type="evidence" value="ECO:0007669"/>
    <property type="project" value="UniProtKB-UniRule"/>
</dbReference>
<dbReference type="Gene3D" id="3.30.1400.10">
    <property type="entry name" value="ZipA, C-terminal FtsZ-binding domain"/>
    <property type="match status" value="1"/>
</dbReference>
<dbReference type="HAMAP" id="MF_00509">
    <property type="entry name" value="ZipA"/>
    <property type="match status" value="1"/>
</dbReference>
<dbReference type="InterPro" id="IPR011919">
    <property type="entry name" value="Cell_div_ZipA"/>
</dbReference>
<dbReference type="InterPro" id="IPR007449">
    <property type="entry name" value="ZipA_FtsZ-bd_C"/>
</dbReference>
<dbReference type="InterPro" id="IPR036765">
    <property type="entry name" value="ZipA_FtsZ-bd_C_sf"/>
</dbReference>
<dbReference type="NCBIfam" id="TIGR02205">
    <property type="entry name" value="septum_zipA"/>
    <property type="match status" value="1"/>
</dbReference>
<dbReference type="PANTHER" id="PTHR38685">
    <property type="entry name" value="CELL DIVISION PROTEIN ZIPA"/>
    <property type="match status" value="1"/>
</dbReference>
<dbReference type="PANTHER" id="PTHR38685:SF1">
    <property type="entry name" value="CELL DIVISION PROTEIN ZIPA"/>
    <property type="match status" value="1"/>
</dbReference>
<dbReference type="Pfam" id="PF04354">
    <property type="entry name" value="ZipA_C"/>
    <property type="match status" value="1"/>
</dbReference>
<dbReference type="SMART" id="SM00771">
    <property type="entry name" value="ZipA_C"/>
    <property type="match status" value="1"/>
</dbReference>
<dbReference type="SUPFAM" id="SSF64383">
    <property type="entry name" value="Cell-division protein ZipA, C-terminal domain"/>
    <property type="match status" value="1"/>
</dbReference>
<feature type="chain" id="PRO_1000015150" description="Cell division protein ZipA">
    <location>
        <begin position="1"/>
        <end position="297"/>
    </location>
</feature>
<feature type="topological domain" description="Periplasmic" evidence="1">
    <location>
        <position position="1"/>
    </location>
</feature>
<feature type="transmembrane region" description="Helical" evidence="1">
    <location>
        <begin position="2"/>
        <end position="22"/>
    </location>
</feature>
<feature type="topological domain" description="Cytoplasmic" evidence="1">
    <location>
        <begin position="23"/>
        <end position="297"/>
    </location>
</feature>
<feature type="region of interest" description="Disordered" evidence="2">
    <location>
        <begin position="48"/>
        <end position="150"/>
    </location>
</feature>
<feature type="compositionally biased region" description="Basic and acidic residues" evidence="2">
    <location>
        <begin position="83"/>
        <end position="92"/>
    </location>
</feature>
<feature type="compositionally biased region" description="Acidic residues" evidence="2">
    <location>
        <begin position="124"/>
        <end position="133"/>
    </location>
</feature>
<feature type="compositionally biased region" description="Polar residues" evidence="2">
    <location>
        <begin position="136"/>
        <end position="149"/>
    </location>
</feature>
<organism>
    <name type="scientific">Pseudomonas putida (strain ATCC 700007 / DSM 6899 / JCM 31910 / BCRC 17059 / LMG 24140 / F1)</name>
    <dbReference type="NCBI Taxonomy" id="351746"/>
    <lineage>
        <taxon>Bacteria</taxon>
        <taxon>Pseudomonadati</taxon>
        <taxon>Pseudomonadota</taxon>
        <taxon>Gammaproteobacteria</taxon>
        <taxon>Pseudomonadales</taxon>
        <taxon>Pseudomonadaceae</taxon>
        <taxon>Pseudomonas</taxon>
    </lineage>
</organism>
<name>ZIPA_PSEP1</name>
<sequence length="297" mass="32849">MEIGLREWLILIGIIVIAGILFDGWRRMRGGKGKLKFRLDRSYSNLPDEEGGSAEVLGPSRVLDTHKEPELDESDLPSLSASARDREREPKPVKASKRGKRVSAAADVQQGDLNLSAEQREPDLFADSDDDFAADNNRSSGAAPASSSVKELPPAEEVLVISVISRDEGGFKGPALLQNILESGLRFGEMDIFHRHESMAGHGEVLFSMANAVKPGVFDLDDIDHFSTRAVSFFLGLPGPRHPKQAFDVMVAAARKLAHELNGELKDDQRSVLTAQTIEHYRQRIVEFERRALTQKR</sequence>
<comment type="function">
    <text evidence="1">Essential cell division protein that stabilizes the FtsZ protofilaments by cross-linking them and that serves as a cytoplasmic membrane anchor for the Z ring. Also required for the recruitment to the septal ring of downstream cell division proteins.</text>
</comment>
<comment type="subunit">
    <text evidence="1">Interacts with FtsZ via their C-terminal domains.</text>
</comment>
<comment type="subcellular location">
    <subcellularLocation>
        <location evidence="1">Cell inner membrane</location>
        <topology evidence="1">Single-pass type I membrane protein</topology>
    </subcellularLocation>
    <text evidence="1">Localizes to the Z ring in an FtsZ-dependent manner.</text>
</comment>
<comment type="similarity">
    <text evidence="1">Belongs to the ZipA family.</text>
</comment>
<keyword id="KW-0131">Cell cycle</keyword>
<keyword id="KW-0132">Cell division</keyword>
<keyword id="KW-0997">Cell inner membrane</keyword>
<keyword id="KW-1003">Cell membrane</keyword>
<keyword id="KW-0472">Membrane</keyword>
<keyword id="KW-0812">Transmembrane</keyword>
<keyword id="KW-1133">Transmembrane helix</keyword>
<proteinExistence type="inferred from homology"/>
<reference key="1">
    <citation type="submission" date="2007-05" db="EMBL/GenBank/DDBJ databases">
        <title>Complete sequence of Pseudomonas putida F1.</title>
        <authorList>
            <consortium name="US DOE Joint Genome Institute"/>
            <person name="Copeland A."/>
            <person name="Lucas S."/>
            <person name="Lapidus A."/>
            <person name="Barry K."/>
            <person name="Detter J.C."/>
            <person name="Glavina del Rio T."/>
            <person name="Hammon N."/>
            <person name="Israni S."/>
            <person name="Dalin E."/>
            <person name="Tice H."/>
            <person name="Pitluck S."/>
            <person name="Chain P."/>
            <person name="Malfatti S."/>
            <person name="Shin M."/>
            <person name="Vergez L."/>
            <person name="Schmutz J."/>
            <person name="Larimer F."/>
            <person name="Land M."/>
            <person name="Hauser L."/>
            <person name="Kyrpides N."/>
            <person name="Lykidis A."/>
            <person name="Parales R."/>
            <person name="Richardson P."/>
        </authorList>
    </citation>
    <scope>NUCLEOTIDE SEQUENCE [LARGE SCALE GENOMIC DNA]</scope>
    <source>
        <strain>ATCC 700007 / DSM 6899 / JCM 31910 / BCRC 17059 / LMG 24140 / F1</strain>
    </source>
</reference>
<protein>
    <recommendedName>
        <fullName evidence="1">Cell division protein ZipA</fullName>
    </recommendedName>
</protein>
<gene>
    <name evidence="1" type="primary">zipA</name>
    <name type="ordered locus">Pput_1593</name>
</gene>
<accession>A5W0T9</accession>